<reference key="1">
    <citation type="journal article" date="1999" name="Genome Res.">
        <title>A cluster of ABA-regulated genes on Arabidopsis thaliana BAC T07M07.</title>
        <authorList>
            <person name="Wang M.L."/>
            <person name="Belmonte S."/>
            <person name="Kim U."/>
            <person name="Dolan M."/>
            <person name="Morris J.W."/>
            <person name="Goodman H.M."/>
        </authorList>
    </citation>
    <scope>NUCLEOTIDE SEQUENCE [GENOMIC DNA]</scope>
</reference>
<reference key="2">
    <citation type="journal article" date="1999" name="Nature">
        <title>Sequence and analysis of chromosome 2 of the plant Arabidopsis thaliana.</title>
        <authorList>
            <person name="Lin X."/>
            <person name="Kaul S."/>
            <person name="Rounsley S.D."/>
            <person name="Shea T.P."/>
            <person name="Benito M.-I."/>
            <person name="Town C.D."/>
            <person name="Fujii C.Y."/>
            <person name="Mason T.M."/>
            <person name="Bowman C.L."/>
            <person name="Barnstead M.E."/>
            <person name="Feldblyum T.V."/>
            <person name="Buell C.R."/>
            <person name="Ketchum K.A."/>
            <person name="Lee J.J."/>
            <person name="Ronning C.M."/>
            <person name="Koo H.L."/>
            <person name="Moffat K.S."/>
            <person name="Cronin L.A."/>
            <person name="Shen M."/>
            <person name="Pai G."/>
            <person name="Van Aken S."/>
            <person name="Umayam L."/>
            <person name="Tallon L.J."/>
            <person name="Gill J.E."/>
            <person name="Adams M.D."/>
            <person name="Carrera A.J."/>
            <person name="Creasy T.H."/>
            <person name="Goodman H.M."/>
            <person name="Somerville C.R."/>
            <person name="Copenhaver G.P."/>
            <person name="Preuss D."/>
            <person name="Nierman W.C."/>
            <person name="White O."/>
            <person name="Eisen J.A."/>
            <person name="Salzberg S.L."/>
            <person name="Fraser C.M."/>
            <person name="Venter J.C."/>
        </authorList>
    </citation>
    <scope>NUCLEOTIDE SEQUENCE [LARGE SCALE GENOMIC DNA]</scope>
    <source>
        <strain>cv. Columbia</strain>
    </source>
</reference>
<reference key="3">
    <citation type="journal article" date="2017" name="Plant J.">
        <title>Araport11: a complete reannotation of the Arabidopsis thaliana reference genome.</title>
        <authorList>
            <person name="Cheng C.Y."/>
            <person name="Krishnakumar V."/>
            <person name="Chan A.P."/>
            <person name="Thibaud-Nissen F."/>
            <person name="Schobel S."/>
            <person name="Town C.D."/>
        </authorList>
    </citation>
    <scope>GENOME REANNOTATION</scope>
    <source>
        <strain>cv. Columbia</strain>
    </source>
</reference>
<reference key="4">
    <citation type="journal article" date="2003" name="Science">
        <title>Empirical analysis of transcriptional activity in the Arabidopsis genome.</title>
        <authorList>
            <person name="Yamada K."/>
            <person name="Lim J."/>
            <person name="Dale J.M."/>
            <person name="Chen H."/>
            <person name="Shinn P."/>
            <person name="Palm C.J."/>
            <person name="Southwick A.M."/>
            <person name="Wu H.C."/>
            <person name="Kim C.J."/>
            <person name="Nguyen M."/>
            <person name="Pham P.K."/>
            <person name="Cheuk R.F."/>
            <person name="Karlin-Newmann G."/>
            <person name="Liu S.X."/>
            <person name="Lam B."/>
            <person name="Sakano H."/>
            <person name="Wu T."/>
            <person name="Yu G."/>
            <person name="Miranda M."/>
            <person name="Quach H.L."/>
            <person name="Tripp M."/>
            <person name="Chang C.H."/>
            <person name="Lee J.M."/>
            <person name="Toriumi M.J."/>
            <person name="Chan M.M."/>
            <person name="Tang C.C."/>
            <person name="Onodera C.S."/>
            <person name="Deng J.M."/>
            <person name="Akiyama K."/>
            <person name="Ansari Y."/>
            <person name="Arakawa T."/>
            <person name="Banh J."/>
            <person name="Banno F."/>
            <person name="Bowser L."/>
            <person name="Brooks S.Y."/>
            <person name="Carninci P."/>
            <person name="Chao Q."/>
            <person name="Choy N."/>
            <person name="Enju A."/>
            <person name="Goldsmith A.D."/>
            <person name="Gurjal M."/>
            <person name="Hansen N.F."/>
            <person name="Hayashizaki Y."/>
            <person name="Johnson-Hopson C."/>
            <person name="Hsuan V.W."/>
            <person name="Iida K."/>
            <person name="Karnes M."/>
            <person name="Khan S."/>
            <person name="Koesema E."/>
            <person name="Ishida J."/>
            <person name="Jiang P.X."/>
            <person name="Jones T."/>
            <person name="Kawai J."/>
            <person name="Kamiya A."/>
            <person name="Meyers C."/>
            <person name="Nakajima M."/>
            <person name="Narusaka M."/>
            <person name="Seki M."/>
            <person name="Sakurai T."/>
            <person name="Satou M."/>
            <person name="Tamse R."/>
            <person name="Vaysberg M."/>
            <person name="Wallender E.K."/>
            <person name="Wong C."/>
            <person name="Yamamura Y."/>
            <person name="Yuan S."/>
            <person name="Shinozaki K."/>
            <person name="Davis R.W."/>
            <person name="Theologis A."/>
            <person name="Ecker J.R."/>
        </authorList>
    </citation>
    <scope>NUCLEOTIDE SEQUENCE [LARGE SCALE MRNA]</scope>
    <source>
        <strain>cv. Columbia</strain>
    </source>
</reference>
<reference key="5">
    <citation type="submission" date="2002-03" db="EMBL/GenBank/DDBJ databases">
        <title>Full-length cDNA from Arabidopsis thaliana.</title>
        <authorList>
            <person name="Brover V.V."/>
            <person name="Troukhan M.E."/>
            <person name="Alexandrov N.A."/>
            <person name="Lu Y.-P."/>
            <person name="Flavell R.B."/>
            <person name="Feldmann K.A."/>
        </authorList>
    </citation>
    <scope>NUCLEOTIDE SEQUENCE [LARGE SCALE MRNA]</scope>
</reference>
<reference key="6">
    <citation type="journal article" date="2009" name="Nature">
        <title>A gate-latch-lock mechanism for hormone signalling by abscisic acid receptors.</title>
        <authorList>
            <person name="Melcher K."/>
            <person name="Ng L.-M."/>
            <person name="Zhou X.E."/>
            <person name="Soon F.-F."/>
            <person name="Xu Y."/>
            <person name="Suino-Powell K.M."/>
            <person name="Park S.-Y."/>
            <person name="Weiner J.J."/>
            <person name="Fujii H."/>
            <person name="Chinnusamy V."/>
            <person name="Kovach A."/>
            <person name="Li J."/>
            <person name="Wang Y."/>
            <person name="Li J."/>
            <person name="Peterson F.C."/>
            <person name="Jensen D.R."/>
            <person name="Yong E.-L."/>
            <person name="Volkman B.F."/>
            <person name="Cutler S.R."/>
            <person name="Zhu J.-K."/>
            <person name="Xu H.E."/>
        </authorList>
    </citation>
    <scope>INTERACTION WITH HAB1; ABI1 AND ABI2</scope>
</reference>
<reference key="7">
    <citation type="journal article" date="2009" name="Plant J.">
        <title>Modulation of drought resistance by the abscisic acid receptor PYL5 through inhibition of clade A PP2Cs.</title>
        <authorList>
            <person name="Santiago J."/>
            <person name="Rodrigues A."/>
            <person name="Saez A."/>
            <person name="Rubio S."/>
            <person name="Antoni R."/>
            <person name="Dupeux F."/>
            <person name="Park S.-Y."/>
            <person name="Marquez J.A."/>
            <person name="Cutler S.R."/>
            <person name="Rodriguez P.L."/>
        </authorList>
    </citation>
    <scope>INTERACTION WITH HAB1</scope>
</reference>
<reference key="8">
    <citation type="journal article" date="2009" name="Science">
        <title>Regulators of PP2C phosphatase activity function as abscisic acid sensors.</title>
        <authorList>
            <person name="Ma Y."/>
            <person name="Szostkiewicz I."/>
            <person name="Korte A."/>
            <person name="Moes D."/>
            <person name="Yang Y."/>
            <person name="Christmann A."/>
            <person name="Grill E."/>
        </authorList>
    </citation>
    <scope>GENE FAMILY</scope>
</reference>
<reference key="9">
    <citation type="journal article" date="2009" name="Science">
        <title>Abscisic acid inhibits type 2C protein phosphatases via the PYR/PYL family of START proteins.</title>
        <authorList>
            <person name="Park S.-Y."/>
            <person name="Fung P."/>
            <person name="Nishimura N."/>
            <person name="Jensen D.R."/>
            <person name="Fujii H."/>
            <person name="Zhao Y."/>
            <person name="Lumba S."/>
            <person name="Santiago J."/>
            <person name="Rodrigues A."/>
            <person name="Chow T.F."/>
            <person name="Alfred S.E."/>
            <person name="Bonetta D."/>
            <person name="Finkelstein R."/>
            <person name="Provart N.J."/>
            <person name="Desveaux D."/>
            <person name="Rodriguez P.L."/>
            <person name="McCourt P."/>
            <person name="Zhu J.-K."/>
            <person name="Schroeder J.I."/>
            <person name="Volkman B.F."/>
            <person name="Cutler S.R."/>
        </authorList>
    </citation>
    <scope>GENE FAMILY</scope>
    <scope>NOMENCLATURE</scope>
</reference>
<reference key="10">
    <citation type="journal article" date="2010" name="Plant J.">
        <title>PYR/PYL/RCAR family members are major in-vivo ABI1 protein phosphatase 2C-interacting proteins in Arabidopsis.</title>
        <authorList>
            <person name="Nishimura N."/>
            <person name="Sarkeshik A."/>
            <person name="Nito K."/>
            <person name="Park S.-Y."/>
            <person name="Wang A."/>
            <person name="Carvalho P.C."/>
            <person name="Lee S."/>
            <person name="Caddell D.F."/>
            <person name="Cutler S.R."/>
            <person name="Chory J."/>
            <person name="Yates J.R."/>
            <person name="Schroeder J.I."/>
        </authorList>
    </citation>
    <scope>INTERACTION WITH ABI1</scope>
    <scope>IDENTIFICATION BY MASS SPECTROMETRY</scope>
</reference>
<reference key="11">
    <citation type="journal article" date="2011" name="Mol. Cell">
        <title>The molecular basis of ABA-independent inhibition of PP2Cs by a subclass of PYL proteins.</title>
        <authorList>
            <person name="Hao Q."/>
            <person name="Yin P."/>
            <person name="Li W."/>
            <person name="Wang L."/>
            <person name="Yan C."/>
            <person name="Lin Z."/>
            <person name="Wu J.Z."/>
            <person name="Wang J."/>
            <person name="Yan S.F."/>
            <person name="Yan N."/>
        </authorList>
    </citation>
    <scope>FUNCTION</scope>
    <scope>MONOMER</scope>
    <scope>GENE FAMILY</scope>
</reference>
<reference key="12">
    <citation type="journal article" date="2013" name="PLoS ONE">
        <title>Structural insights into the abscisic acid stereospecificity by the ABA receptors PYR/PYL/RCAR.</title>
        <authorList>
            <person name="Zhang X."/>
            <person name="Jiang L."/>
            <person name="Wang G."/>
            <person name="Yu L."/>
            <person name="Zhang Q."/>
            <person name="Xin Q."/>
            <person name="Wu W."/>
            <person name="Gong Z."/>
            <person name="Chen Z."/>
        </authorList>
    </citation>
    <scope>FUNCTION</scope>
    <scope>GENE FAMILY</scope>
</reference>
<reference key="13">
    <citation type="journal article" date="2014" name="Plant Cell">
        <title>C2-domain abscisic acid-related proteins mediate the interaction of PYR/PYL/RCAR abscisic acid receptors with the plasma membrane and regulate abscisic acid sensitivity in Arabidopsis.</title>
        <authorList>
            <person name="Rodriguez L."/>
            <person name="Gonzalez-Guzman M."/>
            <person name="Diaz M."/>
            <person name="Rodrigues A."/>
            <person name="Izquierdo-Garcia A.C."/>
            <person name="Peirats-Llobet M."/>
            <person name="Fernandez M.A."/>
            <person name="Antoni R."/>
            <person name="Fernandez D."/>
            <person name="Marquez J.A."/>
            <person name="Mulet J.M."/>
            <person name="Albert A."/>
            <person name="Rodriguez P.L."/>
        </authorList>
    </citation>
    <scope>INTERACTION WITH CAR1 AND CAR4</scope>
    <scope>SUBCELLULAR LOCATION</scope>
</reference>
<reference key="14">
    <citation type="journal article" date="2016" name="Sci. Rep.">
        <title>An ABA-increased interaction of the PYL6 ABA receptor with MYC2 Transcription Factor: A putative link of ABA and JA signaling.</title>
        <authorList>
            <person name="Aleman F."/>
            <person name="Yazaki J."/>
            <person name="Lee M."/>
            <person name="Takahashi Y."/>
            <person name="Kim A.Y."/>
            <person name="Li Z."/>
            <person name="Kinoshita T."/>
            <person name="Ecker J.R."/>
            <person name="Schroeder J.I."/>
        </authorList>
    </citation>
    <scope>FUNCTION</scope>
    <scope>INTERACTION WITH MYC2</scope>
    <scope>SUBCELLULAR LOCATION</scope>
    <scope>DISRUPTION PHENOTYPE</scope>
</reference>
<evidence type="ECO:0000250" key="1">
    <source>
        <dbReference type="UniProtKB" id="O49686"/>
    </source>
</evidence>
<evidence type="ECO:0000250" key="2">
    <source>
        <dbReference type="UniProtKB" id="Q84MC7"/>
    </source>
</evidence>
<evidence type="ECO:0000250" key="3">
    <source>
        <dbReference type="UniProtKB" id="Q8VZS8"/>
    </source>
</evidence>
<evidence type="ECO:0000250" key="4">
    <source>
        <dbReference type="UniProtKB" id="Q9FLB1"/>
    </source>
</evidence>
<evidence type="ECO:0000269" key="5">
    <source>
    </source>
</evidence>
<evidence type="ECO:0000269" key="6">
    <source>
    </source>
</evidence>
<evidence type="ECO:0000269" key="7">
    <source>
    </source>
</evidence>
<evidence type="ECO:0000269" key="8">
    <source>
    </source>
</evidence>
<evidence type="ECO:0000269" key="9">
    <source>
    </source>
</evidence>
<evidence type="ECO:0000269" key="10">
    <source>
    </source>
</evidence>
<evidence type="ECO:0000269" key="11">
    <source>
    </source>
</evidence>
<evidence type="ECO:0000305" key="12"/>
<proteinExistence type="evidence at protein level"/>
<dbReference type="EMBL" id="AF085279">
    <property type="protein sequence ID" value="AAD25950.1"/>
    <property type="status" value="ALT_INIT"/>
    <property type="molecule type" value="Genomic_DNA"/>
</dbReference>
<dbReference type="EMBL" id="AC007020">
    <property type="protein sequence ID" value="AAD25668.2"/>
    <property type="molecule type" value="Genomic_DNA"/>
</dbReference>
<dbReference type="EMBL" id="CP002685">
    <property type="protein sequence ID" value="AEC09815.1"/>
    <property type="molecule type" value="Genomic_DNA"/>
</dbReference>
<dbReference type="EMBL" id="BT004281">
    <property type="protein sequence ID" value="AAO42281.1"/>
    <property type="molecule type" value="mRNA"/>
</dbReference>
<dbReference type="EMBL" id="BT005608">
    <property type="protein sequence ID" value="AAO64028.1"/>
    <property type="molecule type" value="mRNA"/>
</dbReference>
<dbReference type="EMBL" id="AY088453">
    <property type="protein sequence ID" value="AAM65989.1"/>
    <property type="molecule type" value="mRNA"/>
</dbReference>
<dbReference type="RefSeq" id="NP_565928.1">
    <property type="nucleotide sequence ID" value="NM_129593.3"/>
</dbReference>
<dbReference type="SMR" id="Q8S8E3"/>
<dbReference type="BioGRID" id="3964">
    <property type="interactions" value="30"/>
</dbReference>
<dbReference type="DIP" id="DIP-53482N"/>
<dbReference type="FunCoup" id="Q8S8E3">
    <property type="interactions" value="369"/>
</dbReference>
<dbReference type="IntAct" id="Q8S8E3">
    <property type="interactions" value="27"/>
</dbReference>
<dbReference type="MINT" id="Q8S8E3"/>
<dbReference type="STRING" id="3702.Q8S8E3"/>
<dbReference type="PaxDb" id="3702-AT2G40330.1"/>
<dbReference type="ProteomicsDB" id="226012"/>
<dbReference type="EnsemblPlants" id="AT2G40330.1">
    <property type="protein sequence ID" value="AT2G40330.1"/>
    <property type="gene ID" value="AT2G40330"/>
</dbReference>
<dbReference type="GeneID" id="818626"/>
<dbReference type="Gramene" id="AT2G40330.1">
    <property type="protein sequence ID" value="AT2G40330.1"/>
    <property type="gene ID" value="AT2G40330"/>
</dbReference>
<dbReference type="KEGG" id="ath:AT2G40330"/>
<dbReference type="Araport" id="AT2G40330"/>
<dbReference type="TAIR" id="AT2G40330">
    <property type="gene designation" value="PYL6"/>
</dbReference>
<dbReference type="eggNOG" id="ENOG502QWFG">
    <property type="taxonomic scope" value="Eukaryota"/>
</dbReference>
<dbReference type="HOGENOM" id="CLU_077517_0_0_1"/>
<dbReference type="InParanoid" id="Q8S8E3"/>
<dbReference type="OMA" id="KHFISTR"/>
<dbReference type="OrthoDB" id="4436220at2759"/>
<dbReference type="PhylomeDB" id="Q8S8E3"/>
<dbReference type="PRO" id="PR:Q8S8E3"/>
<dbReference type="Proteomes" id="UP000006548">
    <property type="component" value="Chromosome 2"/>
</dbReference>
<dbReference type="ExpressionAtlas" id="Q8S8E3">
    <property type="expression patterns" value="baseline and differential"/>
</dbReference>
<dbReference type="GO" id="GO:0005737">
    <property type="term" value="C:cytoplasm"/>
    <property type="evidence" value="ECO:0000250"/>
    <property type="project" value="UniProtKB"/>
</dbReference>
<dbReference type="GO" id="GO:0005634">
    <property type="term" value="C:nucleus"/>
    <property type="evidence" value="ECO:0000314"/>
    <property type="project" value="UniProtKB"/>
</dbReference>
<dbReference type="GO" id="GO:0005886">
    <property type="term" value="C:plasma membrane"/>
    <property type="evidence" value="ECO:0007669"/>
    <property type="project" value="UniProtKB-SubCell"/>
</dbReference>
<dbReference type="GO" id="GO:0010427">
    <property type="term" value="F:abscisic acid binding"/>
    <property type="evidence" value="ECO:0000250"/>
    <property type="project" value="UniProtKB"/>
</dbReference>
<dbReference type="GO" id="GO:0042803">
    <property type="term" value="F:protein homodimerization activity"/>
    <property type="evidence" value="ECO:0000250"/>
    <property type="project" value="UniProtKB"/>
</dbReference>
<dbReference type="GO" id="GO:0004864">
    <property type="term" value="F:protein phosphatase inhibitor activity"/>
    <property type="evidence" value="ECO:0000314"/>
    <property type="project" value="UniProtKB"/>
</dbReference>
<dbReference type="GO" id="GO:0038023">
    <property type="term" value="F:signaling receptor activity"/>
    <property type="evidence" value="ECO:0000250"/>
    <property type="project" value="UniProtKB"/>
</dbReference>
<dbReference type="GO" id="GO:0009738">
    <property type="term" value="P:abscisic acid-activated signaling pathway"/>
    <property type="evidence" value="ECO:0000250"/>
    <property type="project" value="UniProtKB"/>
</dbReference>
<dbReference type="GO" id="GO:0009867">
    <property type="term" value="P:jasmonic acid mediated signaling pathway"/>
    <property type="evidence" value="ECO:0000315"/>
    <property type="project" value="UniProtKB"/>
</dbReference>
<dbReference type="CDD" id="cd07821">
    <property type="entry name" value="PYR_PYL_RCAR_like"/>
    <property type="match status" value="1"/>
</dbReference>
<dbReference type="FunFam" id="3.30.530.20:FF:000024">
    <property type="entry name" value="Abscisic acid receptor PYL4"/>
    <property type="match status" value="1"/>
</dbReference>
<dbReference type="Gene3D" id="3.30.530.20">
    <property type="match status" value="1"/>
</dbReference>
<dbReference type="InterPro" id="IPR050279">
    <property type="entry name" value="Plant_def-hormone_signal"/>
</dbReference>
<dbReference type="InterPro" id="IPR019587">
    <property type="entry name" value="Polyketide_cyclase/dehydratase"/>
</dbReference>
<dbReference type="InterPro" id="IPR023393">
    <property type="entry name" value="START-like_dom_sf"/>
</dbReference>
<dbReference type="PANTHER" id="PTHR31213:SF138">
    <property type="entry name" value="ABSCISIC ACID RECEPTOR PYL6"/>
    <property type="match status" value="1"/>
</dbReference>
<dbReference type="PANTHER" id="PTHR31213">
    <property type="entry name" value="OS08G0374000 PROTEIN-RELATED"/>
    <property type="match status" value="1"/>
</dbReference>
<dbReference type="Pfam" id="PF10604">
    <property type="entry name" value="Polyketide_cyc2"/>
    <property type="match status" value="1"/>
</dbReference>
<dbReference type="SUPFAM" id="SSF55961">
    <property type="entry name" value="Bet v1-like"/>
    <property type="match status" value="1"/>
</dbReference>
<protein>
    <recommendedName>
        <fullName>Abscisic acid receptor PYL6</fullName>
    </recommendedName>
    <alternativeName>
        <fullName>ABI1-binding protein 5</fullName>
    </alternativeName>
    <alternativeName>
        <fullName>PYR1-like protein 6</fullName>
    </alternativeName>
    <alternativeName>
        <fullName>Regulatory components of ABA receptor 9</fullName>
    </alternativeName>
</protein>
<keyword id="KW-0938">Abscisic acid signaling pathway</keyword>
<keyword id="KW-1003">Cell membrane</keyword>
<keyword id="KW-0963">Cytoplasm</keyword>
<keyword id="KW-1015">Disulfide bond</keyword>
<keyword id="KW-0472">Membrane</keyword>
<keyword id="KW-0539">Nucleus</keyword>
<keyword id="KW-0650">Protein phosphatase inhibitor</keyword>
<keyword id="KW-0675">Receptor</keyword>
<keyword id="KW-1185">Reference proteome</keyword>
<comment type="function">
    <text evidence="8 9 11">Receptor for abscisic acid (ABA) required for ABA-mediated responses such as stomatal closure and germination inhibition. Inhibits the activity of group-A protein phosphatases type 2C (PP2Cs) in an ABA-independent manner but more efficiently when activated by ABA (PubMed:21658606, PubMed:23844015). Can be activated by both (-)-ABA and (+)-ABA (PubMed:23844015). May link ABA and jasmonate signaling pathways by modifying MYC2 transcriptional activity, and regulation of JAZ6 and JAZ8 gene expression by MYC2 (PubMed:27357749).</text>
</comment>
<comment type="subunit">
    <text evidence="1 5 6 7 8 10 11">Monomer (PubMed:21658606). Homodimer. Binds ABA on one subunit only (By similarity). Interacts with HAB1, ABI1 and ABI2, and possibly with other PP2Cs (PubMed:19624469, PubMed:19874541, PubMed:19898420). Binds to CARs protein in an ABA-independent manner, both at the plasma membrane and in the nucleus. Interacts directly with CAR1 and CAR4 (PubMed:25465408). Interacts with MYC2 in the nucleus. Interaction with MYC2 is increased in the presence of abscisic acid (PubMed:27357749).</text>
</comment>
<comment type="interaction">
    <interactant intactId="EBI-2363192">
        <id>Q8S8E3</id>
    </interactant>
    <interactant intactId="EBI-782526">
        <id>P49597</id>
        <label>ABI1</label>
    </interactant>
    <organismsDiffer>false</organismsDiffer>
    <experiments>9</experiments>
</comment>
<comment type="interaction">
    <interactant intactId="EBI-2363192">
        <id>Q8S8E3</id>
    </interactant>
    <interactant intactId="EBI-537680">
        <id>O04719</id>
        <label>ABI2</label>
    </interactant>
    <organismsDiffer>false</organismsDiffer>
    <experiments>4</experiments>
</comment>
<comment type="interaction">
    <interactant intactId="EBI-2363192">
        <id>Q8S8E3</id>
    </interactant>
    <interactant intactId="EBI-15803514">
        <id>O04719-1</id>
        <label>ABI2</label>
    </interactant>
    <organismsDiffer>false</organismsDiffer>
    <experiments>2</experiments>
</comment>
<comment type="interaction">
    <interactant intactId="EBI-2363192">
        <id>Q8S8E3</id>
    </interactant>
    <interactant intactId="EBI-979206">
        <id>Q9SFD5</id>
        <label>ADA2A</label>
    </interactant>
    <organismsDiffer>false</organismsDiffer>
    <experiments>3</experiments>
</comment>
<comment type="interaction">
    <interactant intactId="EBI-2363192">
        <id>Q8S8E3</id>
    </interactant>
    <interactant intactId="EBI-1573499">
        <id>Q9LNW3</id>
        <label>AIP1</label>
    </interactant>
    <organismsDiffer>false</organismsDiffer>
    <experiments>3</experiments>
</comment>
<comment type="interaction">
    <interactant intactId="EBI-2363192">
        <id>Q8S8E3</id>
    </interactant>
    <interactant intactId="EBI-25529097">
        <id>Q8VYZ1</id>
        <label>At1g33050</label>
    </interactant>
    <organismsDiffer>false</organismsDiffer>
    <experiments>3</experiments>
</comment>
<comment type="interaction">
    <interactant intactId="EBI-2363192">
        <id>Q8S8E3</id>
    </interactant>
    <interactant intactId="EBI-25528474">
        <id>A0A1P8AVS2</id>
        <label>At1g72340</label>
    </interactant>
    <organismsDiffer>false</organismsDiffer>
    <experiments>3</experiments>
</comment>
<comment type="interaction">
    <interactant intactId="EBI-2363192">
        <id>Q8S8E3</id>
    </interactant>
    <interactant intactId="EBI-4441103">
        <id>Q9ZW21</id>
        <label>At2g29380</label>
    </interactant>
    <organismsDiffer>false</organismsDiffer>
    <experiments>3</experiments>
</comment>
<comment type="interaction">
    <interactant intactId="EBI-2363192">
        <id>Q8S8E3</id>
    </interactant>
    <interactant intactId="EBI-25529212">
        <id>Q9ZPY4</id>
        <label>At2g46550</label>
    </interactant>
    <organismsDiffer>false</organismsDiffer>
    <experiments>3</experiments>
</comment>
<comment type="interaction">
    <interactant intactId="EBI-2363192">
        <id>Q8S8E3</id>
    </interactant>
    <interactant intactId="EBI-25528671">
        <id>Q9SZE1</id>
        <label>At4g29120</label>
    </interactant>
    <organismsDiffer>false</organismsDiffer>
    <experiments>3</experiments>
</comment>
<comment type="interaction">
    <interactant intactId="EBI-2363192">
        <id>Q8S8E3</id>
    </interactant>
    <interactant intactId="EBI-25529113">
        <id>A0A178UGU3</id>
        <label>AXX17_At5g13230</label>
    </interactant>
    <organismsDiffer>false</organismsDiffer>
    <experiments>3</experiments>
</comment>
<comment type="interaction">
    <interactant intactId="EBI-2363192">
        <id>Q8S8E3</id>
    </interactant>
    <interactant intactId="EBI-1536756">
        <id>Q9SAD4</id>
        <label>ESR1</label>
    </interactant>
    <organismsDiffer>false</organismsDiffer>
    <experiments>3</experiments>
</comment>
<comment type="interaction">
    <interactant intactId="EBI-2363192">
        <id>Q8S8E3</id>
    </interactant>
    <interactant intactId="EBI-2355237">
        <id>Q8L743</id>
        <label>G6PD3</label>
    </interactant>
    <organismsDiffer>false</organismsDiffer>
    <experiments>3</experiments>
</comment>
<comment type="interaction">
    <interactant intactId="EBI-2363192">
        <id>Q8S8E3</id>
    </interactant>
    <interactant intactId="EBI-2309302">
        <id>Q9CAJ0</id>
        <label>HAB1</label>
    </interactant>
    <organismsDiffer>false</organismsDiffer>
    <experiments>9</experiments>
</comment>
<comment type="interaction">
    <interactant intactId="EBI-2363192">
        <id>Q8S8E3</id>
    </interactant>
    <interactant intactId="EBI-15803614">
        <id>Q9LNP9</id>
        <label>HAB2</label>
    </interactant>
    <organismsDiffer>false</organismsDiffer>
    <experiments>5</experiments>
</comment>
<comment type="interaction">
    <interactant intactId="EBI-2363192">
        <id>Q8S8E3</id>
    </interactant>
    <interactant intactId="EBI-2324225">
        <id>Q9SN12</id>
        <label>MYB77</label>
    </interactant>
    <organismsDiffer>false</organismsDiffer>
    <experiments>3</experiments>
</comment>
<comment type="interaction">
    <interactant intactId="EBI-2363192">
        <id>Q8S8E3</id>
    </interactant>
    <interactant intactId="EBI-1238916">
        <id>Q9LS24</id>
        <label>NAC096</label>
    </interactant>
    <organismsDiffer>false</organismsDiffer>
    <experiments>3</experiments>
</comment>
<comment type="interaction">
    <interactant intactId="EBI-2363192">
        <id>Q8S8E3</id>
    </interactant>
    <interactant intactId="EBI-1645478">
        <id>Q38845</id>
        <label>PP2AA1</label>
    </interactant>
    <organismsDiffer>false</organismsDiffer>
    <experiments>3</experiments>
</comment>
<comment type="interaction">
    <interactant intactId="EBI-2363192">
        <id>Q8S8E3</id>
    </interactant>
    <interactant intactId="EBI-1764934">
        <id>P49598</id>
        <label>PP2CA</label>
    </interactant>
    <organismsDiffer>false</organismsDiffer>
    <experiments>3</experiments>
</comment>
<comment type="interaction">
    <interactant intactId="EBI-2363192">
        <id>Q8S8E3</id>
    </interactant>
    <interactant intactId="EBI-3133327">
        <id>O82277</id>
        <label>TCP10</label>
    </interactant>
    <organismsDiffer>false</organismsDiffer>
    <experiments>3</experiments>
</comment>
<comment type="interaction">
    <interactant intactId="EBI-2363192">
        <id>Q8S8E3</id>
    </interactant>
    <interactant intactId="EBI-4424877">
        <id>Q9S7W5</id>
        <label>TCP13</label>
    </interactant>
    <organismsDiffer>false</organismsDiffer>
    <experiments>3</experiments>
</comment>
<comment type="interaction">
    <interactant intactId="EBI-2363192">
        <id>Q8S8E3</id>
    </interactant>
    <interactant intactId="EBI-4426144">
        <id>Q9C9L2</id>
        <label>TCP15</label>
    </interactant>
    <organismsDiffer>false</organismsDiffer>
    <experiments>3</experiments>
</comment>
<comment type="interaction">
    <interactant intactId="EBI-2363192">
        <id>Q8S8E3</id>
    </interactant>
    <interactant intactId="EBI-4426178">
        <id>Q9LT89</id>
        <label>TCP19</label>
    </interactant>
    <organismsDiffer>false</organismsDiffer>
    <experiments>3</experiments>
</comment>
<comment type="interaction">
    <interactant intactId="EBI-2363192">
        <id>Q8S8E3</id>
    </interactant>
    <interactant intactId="EBI-25522447">
        <id>Q9MAH8</id>
        <label>TCP3</label>
    </interactant>
    <organismsDiffer>false</organismsDiffer>
    <experiments>3</experiments>
</comment>
<comment type="interaction">
    <interactant intactId="EBI-2363192">
        <id>Q8S8E3</id>
    </interactant>
    <interactant intactId="EBI-9838721">
        <id>O64647</id>
        <label>TCP9</label>
    </interactant>
    <organismsDiffer>false</organismsDiffer>
    <experiments>3</experiments>
</comment>
<comment type="interaction">
    <interactant intactId="EBI-2363192">
        <id>Q8S8E3</id>
    </interactant>
    <interactant intactId="EBI-4426557">
        <id>Q84MB2</id>
        <label>TIFY8</label>
    </interactant>
    <organismsDiffer>false</organismsDiffer>
    <experiments>3</experiments>
</comment>
<comment type="interaction">
    <interactant intactId="EBI-2363192">
        <id>Q8S8E3</id>
    </interactant>
    <interactant intactId="EBI-4424568">
        <id>Q9LVG2</id>
        <label>TOE2</label>
    </interactant>
    <organismsDiffer>false</organismsDiffer>
    <experiments>3</experiments>
</comment>
<comment type="interaction">
    <interactant intactId="EBI-2363192">
        <id>Q8S8E3</id>
    </interactant>
    <interactant intactId="EBI-25529069">
        <id>Q9FLC1</id>
    </interactant>
    <organismsDiffer>false</organismsDiffer>
    <experiments>3</experiments>
</comment>
<comment type="subcellular location">
    <subcellularLocation>
        <location evidence="4">Cytoplasm</location>
    </subcellularLocation>
    <subcellularLocation>
        <location evidence="10">Nucleus</location>
    </subcellularLocation>
    <subcellularLocation>
        <location evidence="10">Cell membrane</location>
    </subcellularLocation>
    <subcellularLocation>
        <location evidence="11">Nucleus</location>
    </subcellularLocation>
    <text evidence="10">Localizes at the plasma membrane in the presence of a CAR protein (e.g. CAR1 and CAR4).</text>
</comment>
<comment type="domain">
    <text evidence="3">Upon interaction with ABA, the 'latch' and 'gate' loops change in conformation leading to a tight dimerization and the creation a surface that enables the receptor to dock into and inhibit the PP2C active site.</text>
</comment>
<comment type="disruption phenotype">
    <text evidence="11">No visible phenotype under normal growth conditions, but mutant seedlings exhibit increased sensitivity to abscisic acid-induced inhibition of cotyledon expansion. The inhibition effect is more severe with the combination of abscisic acid and jasmonate.</text>
</comment>
<comment type="similarity">
    <text evidence="12">Belongs to the PYR/PYL/RCAR abscisic acid intracellular receptor family.</text>
</comment>
<comment type="sequence caution" evidence="12">
    <conflict type="erroneous initiation">
        <sequence resource="EMBL-CDS" id="AAD25950"/>
    </conflict>
    <text>Truncated N-terminus.</text>
</comment>
<organism>
    <name type="scientific">Arabidopsis thaliana</name>
    <name type="common">Mouse-ear cress</name>
    <dbReference type="NCBI Taxonomy" id="3702"/>
    <lineage>
        <taxon>Eukaryota</taxon>
        <taxon>Viridiplantae</taxon>
        <taxon>Streptophyta</taxon>
        <taxon>Embryophyta</taxon>
        <taxon>Tracheophyta</taxon>
        <taxon>Spermatophyta</taxon>
        <taxon>Magnoliopsida</taxon>
        <taxon>eudicotyledons</taxon>
        <taxon>Gunneridae</taxon>
        <taxon>Pentapetalae</taxon>
        <taxon>rosids</taxon>
        <taxon>malvids</taxon>
        <taxon>Brassicales</taxon>
        <taxon>Brassicaceae</taxon>
        <taxon>Camelineae</taxon>
        <taxon>Arabidopsis</taxon>
    </lineage>
</organism>
<name>PYL6_ARATH</name>
<sequence>MPTSIQFQRSSTAAEAANATVRNYPHHHQKQVQKVSLTRGMADVPEHVELSHTHVVGPSQCFSVVVQDVEAPVSTVWSILSRFEHPQAYKHFVKSCHVVIGDGREVGSVREVRVVSGLPAAFSLERLEIMDDDRHVISFSVVGGDHRLMNYKSVTTVHESEEDSDGKKRTRVVESYVVDVPAGNDKEETCSFADTIVRCNLQSLAKLAENTSKFS</sequence>
<feature type="chain" id="PRO_0000391741" description="Abscisic acid receptor PYL6">
    <location>
        <begin position="1"/>
        <end position="215"/>
    </location>
</feature>
<feature type="region of interest" description="START-like">
    <location>
        <begin position="54"/>
        <end position="209"/>
    </location>
</feature>
<feature type="short sequence motif" description="Gate loop" evidence="3">
    <location>
        <begin position="116"/>
        <end position="120"/>
    </location>
</feature>
<feature type="short sequence motif" description="Latch loop" evidence="3">
    <location>
        <begin position="146"/>
        <end position="148"/>
    </location>
</feature>
<feature type="binding site" evidence="1">
    <location>
        <position position="90"/>
    </location>
    <ligand>
        <name>abscisate</name>
        <dbReference type="ChEBI" id="CHEBI:62432"/>
    </ligand>
</feature>
<feature type="binding site" evidence="1">
    <location>
        <begin position="120"/>
        <end position="125"/>
    </location>
    <ligand>
        <name>abscisate</name>
        <dbReference type="ChEBI" id="CHEBI:62432"/>
    </ligand>
</feature>
<feature type="binding site" evidence="1">
    <location>
        <begin position="147"/>
        <end position="153"/>
    </location>
    <ligand>
        <name>abscisate</name>
        <dbReference type="ChEBI" id="CHEBI:62432"/>
    </ligand>
</feature>
<feature type="binding site" evidence="1">
    <location>
        <position position="174"/>
    </location>
    <ligand>
        <name>abscisate</name>
        <dbReference type="ChEBI" id="CHEBI:62432"/>
    </ligand>
</feature>
<feature type="site" description="Involved in interactions with PP2Cs" evidence="1">
    <location>
        <position position="119"/>
    </location>
</feature>
<feature type="disulfide bond" description="Reversible" evidence="2">
    <location>
        <begin position="61"/>
        <end position="190"/>
    </location>
</feature>
<gene>
    <name type="primary">PYL6</name>
    <name type="synonym">ABIP5</name>
    <name type="synonym">RCAR9</name>
    <name type="ordered locus">At2g40330</name>
    <name type="ORF">T3G21</name>
    <name type="ORF">T7M7.15</name>
</gene>
<accession>Q8S8E3</accession>
<accession>Q9S718</accession>